<feature type="chain" id="PRO_1000098129" description="Serine--tRNA ligase">
    <location>
        <begin position="1"/>
        <end position="426"/>
    </location>
</feature>
<feature type="binding site" evidence="1">
    <location>
        <begin position="233"/>
        <end position="235"/>
    </location>
    <ligand>
        <name>L-serine</name>
        <dbReference type="ChEBI" id="CHEBI:33384"/>
    </ligand>
</feature>
<feature type="binding site" evidence="1">
    <location>
        <begin position="264"/>
        <end position="266"/>
    </location>
    <ligand>
        <name>ATP</name>
        <dbReference type="ChEBI" id="CHEBI:30616"/>
    </ligand>
</feature>
<feature type="binding site" evidence="1">
    <location>
        <position position="287"/>
    </location>
    <ligand>
        <name>L-serine</name>
        <dbReference type="ChEBI" id="CHEBI:33384"/>
    </ligand>
</feature>
<feature type="binding site" evidence="1">
    <location>
        <begin position="351"/>
        <end position="354"/>
    </location>
    <ligand>
        <name>ATP</name>
        <dbReference type="ChEBI" id="CHEBI:30616"/>
    </ligand>
</feature>
<feature type="binding site" evidence="1">
    <location>
        <position position="387"/>
    </location>
    <ligand>
        <name>L-serine</name>
        <dbReference type="ChEBI" id="CHEBI:33384"/>
    </ligand>
</feature>
<comment type="function">
    <text evidence="1">Catalyzes the attachment of serine to tRNA(Ser). Is also able to aminoacylate tRNA(Sec) with serine, to form the misacylated tRNA L-seryl-tRNA(Sec), which will be further converted into selenocysteinyl-tRNA(Sec).</text>
</comment>
<comment type="catalytic activity">
    <reaction evidence="1">
        <text>tRNA(Ser) + L-serine + ATP = L-seryl-tRNA(Ser) + AMP + diphosphate + H(+)</text>
        <dbReference type="Rhea" id="RHEA:12292"/>
        <dbReference type="Rhea" id="RHEA-COMP:9669"/>
        <dbReference type="Rhea" id="RHEA-COMP:9703"/>
        <dbReference type="ChEBI" id="CHEBI:15378"/>
        <dbReference type="ChEBI" id="CHEBI:30616"/>
        <dbReference type="ChEBI" id="CHEBI:33019"/>
        <dbReference type="ChEBI" id="CHEBI:33384"/>
        <dbReference type="ChEBI" id="CHEBI:78442"/>
        <dbReference type="ChEBI" id="CHEBI:78533"/>
        <dbReference type="ChEBI" id="CHEBI:456215"/>
        <dbReference type="EC" id="6.1.1.11"/>
    </reaction>
</comment>
<comment type="catalytic activity">
    <reaction evidence="1">
        <text>tRNA(Sec) + L-serine + ATP = L-seryl-tRNA(Sec) + AMP + diphosphate + H(+)</text>
        <dbReference type="Rhea" id="RHEA:42580"/>
        <dbReference type="Rhea" id="RHEA-COMP:9742"/>
        <dbReference type="Rhea" id="RHEA-COMP:10128"/>
        <dbReference type="ChEBI" id="CHEBI:15378"/>
        <dbReference type="ChEBI" id="CHEBI:30616"/>
        <dbReference type="ChEBI" id="CHEBI:33019"/>
        <dbReference type="ChEBI" id="CHEBI:33384"/>
        <dbReference type="ChEBI" id="CHEBI:78442"/>
        <dbReference type="ChEBI" id="CHEBI:78533"/>
        <dbReference type="ChEBI" id="CHEBI:456215"/>
        <dbReference type="EC" id="6.1.1.11"/>
    </reaction>
</comment>
<comment type="pathway">
    <text evidence="1">Aminoacyl-tRNA biosynthesis; selenocysteinyl-tRNA(Sec) biosynthesis; L-seryl-tRNA(Sec) from L-serine and tRNA(Sec): step 1/1.</text>
</comment>
<comment type="subunit">
    <text evidence="1">Homodimer. The tRNA molecule binds across the dimer.</text>
</comment>
<comment type="subcellular location">
    <subcellularLocation>
        <location evidence="1">Cytoplasm</location>
    </subcellularLocation>
</comment>
<comment type="domain">
    <text evidence="1">Consists of two distinct domains, a catalytic core and a N-terminal extension that is involved in tRNA binding.</text>
</comment>
<comment type="similarity">
    <text evidence="1">Belongs to the class-II aminoacyl-tRNA synthetase family. Type-1 seryl-tRNA synthetase subfamily.</text>
</comment>
<reference key="1">
    <citation type="journal article" date="2008" name="Genome Biol.">
        <title>The complete genome, comparative and functional analysis of Stenotrophomonas maltophilia reveals an organism heavily shielded by drug resistance determinants.</title>
        <authorList>
            <person name="Crossman L.C."/>
            <person name="Gould V.C."/>
            <person name="Dow J.M."/>
            <person name="Vernikos G.S."/>
            <person name="Okazaki A."/>
            <person name="Sebaihia M."/>
            <person name="Saunders D."/>
            <person name="Arrowsmith C."/>
            <person name="Carver T."/>
            <person name="Peters N."/>
            <person name="Adlem E."/>
            <person name="Kerhornou A."/>
            <person name="Lord A."/>
            <person name="Murphy L."/>
            <person name="Seeger K."/>
            <person name="Squares R."/>
            <person name="Rutter S."/>
            <person name="Quail M.A."/>
            <person name="Rajandream M.A."/>
            <person name="Harris D."/>
            <person name="Churcher C."/>
            <person name="Bentley S.D."/>
            <person name="Parkhill J."/>
            <person name="Thomson N.R."/>
            <person name="Avison M.B."/>
        </authorList>
    </citation>
    <scope>NUCLEOTIDE SEQUENCE [LARGE SCALE GENOMIC DNA]</scope>
    <source>
        <strain>K279a</strain>
    </source>
</reference>
<evidence type="ECO:0000255" key="1">
    <source>
        <dbReference type="HAMAP-Rule" id="MF_00176"/>
    </source>
</evidence>
<name>SYS_STRMK</name>
<gene>
    <name evidence="1" type="primary">serS</name>
    <name type="ordered locus">Smlt3092</name>
</gene>
<sequence length="426" mass="47158">MLDPALLRHQPADLAERLRTSRGFELDVSALESLEADRKRIQVRTQELQSLRNSRSKAIGQAKAKGEDVSAIMAEVAAFADELKASEVALDELREKIEAISMGIPNLPADDVPAGADENDNVEQSRWGTPRQFDFKVLDHVELGARNGWLDGETAAKLSGSRFTVLRGPIARLHRALAQFMVDLHTGEHGYEETNVPLLVNADSLRGTSQLPKFEDDLFKTAVGDSTRYLIPTSEVPLTNIVRDEIVDAERLPLRMTAHSMCFRAEAGSGGRDVRGMIRQHQFEKVELVSISRPEDSDAEHQRMTRCAEVVLEKLGLPYRKVLLCTGDMGFSAVKTYDLEVWLPSQETYREISSCSNCGDFQARRMQARWRNPATGKPELAHTLNGSGVAVGRAMIAVMENYQNADGSITVPEALRPYMGGLETIA</sequence>
<organism>
    <name type="scientific">Stenotrophomonas maltophilia (strain K279a)</name>
    <dbReference type="NCBI Taxonomy" id="522373"/>
    <lineage>
        <taxon>Bacteria</taxon>
        <taxon>Pseudomonadati</taxon>
        <taxon>Pseudomonadota</taxon>
        <taxon>Gammaproteobacteria</taxon>
        <taxon>Lysobacterales</taxon>
        <taxon>Lysobacteraceae</taxon>
        <taxon>Stenotrophomonas</taxon>
        <taxon>Stenotrophomonas maltophilia group</taxon>
    </lineage>
</organism>
<keyword id="KW-0030">Aminoacyl-tRNA synthetase</keyword>
<keyword id="KW-0067">ATP-binding</keyword>
<keyword id="KW-0963">Cytoplasm</keyword>
<keyword id="KW-0436">Ligase</keyword>
<keyword id="KW-0547">Nucleotide-binding</keyword>
<keyword id="KW-0648">Protein biosynthesis</keyword>
<keyword id="KW-1185">Reference proteome</keyword>
<dbReference type="EC" id="6.1.1.11" evidence="1"/>
<dbReference type="EMBL" id="AM743169">
    <property type="protein sequence ID" value="CAQ46540.1"/>
    <property type="molecule type" value="Genomic_DNA"/>
</dbReference>
<dbReference type="RefSeq" id="WP_005410178.1">
    <property type="nucleotide sequence ID" value="NC_010943.1"/>
</dbReference>
<dbReference type="SMR" id="B2FKE4"/>
<dbReference type="EnsemblBacteria" id="CAQ46540">
    <property type="protein sequence ID" value="CAQ46540"/>
    <property type="gene ID" value="Smlt3092"/>
</dbReference>
<dbReference type="GeneID" id="93834043"/>
<dbReference type="KEGG" id="sml:Smlt3092"/>
<dbReference type="eggNOG" id="COG0172">
    <property type="taxonomic scope" value="Bacteria"/>
</dbReference>
<dbReference type="HOGENOM" id="CLU_023797_1_1_6"/>
<dbReference type="UniPathway" id="UPA00906">
    <property type="reaction ID" value="UER00895"/>
</dbReference>
<dbReference type="Proteomes" id="UP000008840">
    <property type="component" value="Chromosome"/>
</dbReference>
<dbReference type="GO" id="GO:0005737">
    <property type="term" value="C:cytoplasm"/>
    <property type="evidence" value="ECO:0007669"/>
    <property type="project" value="UniProtKB-SubCell"/>
</dbReference>
<dbReference type="GO" id="GO:0005524">
    <property type="term" value="F:ATP binding"/>
    <property type="evidence" value="ECO:0007669"/>
    <property type="project" value="UniProtKB-UniRule"/>
</dbReference>
<dbReference type="GO" id="GO:0004828">
    <property type="term" value="F:serine-tRNA ligase activity"/>
    <property type="evidence" value="ECO:0007669"/>
    <property type="project" value="UniProtKB-UniRule"/>
</dbReference>
<dbReference type="GO" id="GO:0016260">
    <property type="term" value="P:selenocysteine biosynthetic process"/>
    <property type="evidence" value="ECO:0007669"/>
    <property type="project" value="UniProtKB-UniRule"/>
</dbReference>
<dbReference type="GO" id="GO:0006434">
    <property type="term" value="P:seryl-tRNA aminoacylation"/>
    <property type="evidence" value="ECO:0007669"/>
    <property type="project" value="UniProtKB-UniRule"/>
</dbReference>
<dbReference type="CDD" id="cd00770">
    <property type="entry name" value="SerRS_core"/>
    <property type="match status" value="1"/>
</dbReference>
<dbReference type="Gene3D" id="3.30.930.10">
    <property type="entry name" value="Bira Bifunctional Protein, Domain 2"/>
    <property type="match status" value="1"/>
</dbReference>
<dbReference type="Gene3D" id="1.10.287.40">
    <property type="entry name" value="Serine-tRNA synthetase, tRNA binding domain"/>
    <property type="match status" value="1"/>
</dbReference>
<dbReference type="HAMAP" id="MF_00176">
    <property type="entry name" value="Ser_tRNA_synth_type1"/>
    <property type="match status" value="1"/>
</dbReference>
<dbReference type="InterPro" id="IPR002314">
    <property type="entry name" value="aa-tRNA-synt_IIb"/>
</dbReference>
<dbReference type="InterPro" id="IPR006195">
    <property type="entry name" value="aa-tRNA-synth_II"/>
</dbReference>
<dbReference type="InterPro" id="IPR045864">
    <property type="entry name" value="aa-tRNA-synth_II/BPL/LPL"/>
</dbReference>
<dbReference type="InterPro" id="IPR002317">
    <property type="entry name" value="Ser-tRNA-ligase_type_1"/>
</dbReference>
<dbReference type="InterPro" id="IPR015866">
    <property type="entry name" value="Ser-tRNA-synth_1_N"/>
</dbReference>
<dbReference type="InterPro" id="IPR042103">
    <property type="entry name" value="SerRS_1_N_sf"/>
</dbReference>
<dbReference type="InterPro" id="IPR033729">
    <property type="entry name" value="SerRS_core"/>
</dbReference>
<dbReference type="InterPro" id="IPR010978">
    <property type="entry name" value="tRNA-bd_arm"/>
</dbReference>
<dbReference type="NCBIfam" id="TIGR00414">
    <property type="entry name" value="serS"/>
    <property type="match status" value="1"/>
</dbReference>
<dbReference type="PANTHER" id="PTHR43697:SF1">
    <property type="entry name" value="SERINE--TRNA LIGASE"/>
    <property type="match status" value="1"/>
</dbReference>
<dbReference type="PANTHER" id="PTHR43697">
    <property type="entry name" value="SERYL-TRNA SYNTHETASE"/>
    <property type="match status" value="1"/>
</dbReference>
<dbReference type="Pfam" id="PF02403">
    <property type="entry name" value="Seryl_tRNA_N"/>
    <property type="match status" value="1"/>
</dbReference>
<dbReference type="Pfam" id="PF00587">
    <property type="entry name" value="tRNA-synt_2b"/>
    <property type="match status" value="1"/>
</dbReference>
<dbReference type="PIRSF" id="PIRSF001529">
    <property type="entry name" value="Ser-tRNA-synth_IIa"/>
    <property type="match status" value="1"/>
</dbReference>
<dbReference type="PRINTS" id="PR00981">
    <property type="entry name" value="TRNASYNTHSER"/>
</dbReference>
<dbReference type="SUPFAM" id="SSF55681">
    <property type="entry name" value="Class II aaRS and biotin synthetases"/>
    <property type="match status" value="1"/>
</dbReference>
<dbReference type="SUPFAM" id="SSF46589">
    <property type="entry name" value="tRNA-binding arm"/>
    <property type="match status" value="1"/>
</dbReference>
<dbReference type="PROSITE" id="PS50862">
    <property type="entry name" value="AA_TRNA_LIGASE_II"/>
    <property type="match status" value="1"/>
</dbReference>
<proteinExistence type="inferred from homology"/>
<accession>B2FKE4</accession>
<protein>
    <recommendedName>
        <fullName evidence="1">Serine--tRNA ligase</fullName>
        <ecNumber evidence="1">6.1.1.11</ecNumber>
    </recommendedName>
    <alternativeName>
        <fullName evidence="1">Seryl-tRNA synthetase</fullName>
        <shortName evidence="1">SerRS</shortName>
    </alternativeName>
    <alternativeName>
        <fullName evidence="1">Seryl-tRNA(Ser/Sec) synthetase</fullName>
    </alternativeName>
</protein>